<comment type="function">
    <text evidence="1">Catalyzes an unusual C-C bond hydrolysis of 2-hydroxy-6-oxo-6-phenylhexa-2,4-dienoic acid (HOPDA) to produce benzoic acid and 2-hydroxy-2,4-pentadienoic acid (HPD).</text>
</comment>
<comment type="catalytic activity">
    <reaction evidence="1">
        <text>2,6-dioxo-6-phenylhexa-3-enoate + H2O = 2-oxopent-4-enoate + benzoate + H(+)</text>
        <dbReference type="Rhea" id="RHEA:17161"/>
        <dbReference type="ChEBI" id="CHEBI:11641"/>
        <dbReference type="ChEBI" id="CHEBI:15377"/>
        <dbReference type="ChEBI" id="CHEBI:15378"/>
        <dbReference type="ChEBI" id="CHEBI:16150"/>
        <dbReference type="ChEBI" id="CHEBI:64675"/>
        <dbReference type="EC" id="3.7.1.8"/>
    </reaction>
</comment>
<comment type="pathway">
    <text evidence="1">Xenobiotic degradation; biphenyl degradation; 2-hydroxy-2,4-pentadienoate and benzoate from biphenyl: step 4/4.</text>
</comment>
<comment type="subunit">
    <text evidence="1">Homodimer.</text>
</comment>
<comment type="similarity">
    <text evidence="1">Belongs to the AB hydrolase superfamily. BphD family.</text>
</comment>
<protein>
    <recommendedName>
        <fullName evidence="1">2-hydroxy-6-oxo-6-phenylhexa-2,4-dienoate hydrolase</fullName>
        <shortName evidence="1">HOPDA hydrolase</shortName>
        <ecNumber evidence="1">3.7.1.8</ecNumber>
    </recommendedName>
    <alternativeName>
        <fullName evidence="1">2,6-dioxo-6-phenylhexa-3-enoate hydrolase</fullName>
    </alternativeName>
</protein>
<keyword id="KW-0058">Aromatic hydrocarbons catabolism</keyword>
<keyword id="KW-0378">Hydrolase</keyword>
<keyword id="KW-0614">Plasmid</keyword>
<keyword id="KW-1185">Reference proteome</keyword>
<proteinExistence type="inferred from homology"/>
<accession>A1VUV0</accession>
<reference key="1">
    <citation type="journal article" date="2009" name="Environ. Microbiol.">
        <title>The genome of Polaromonas naphthalenivorans strain CJ2, isolated from coal tar-contaminated sediment, reveals physiological and metabolic versatility and evolution through extensive horizontal gene transfer.</title>
        <authorList>
            <person name="Yagi J.M."/>
            <person name="Sims D."/>
            <person name="Brettin T."/>
            <person name="Bruce D."/>
            <person name="Madsen E.L."/>
        </authorList>
    </citation>
    <scope>NUCLEOTIDE SEQUENCE [LARGE SCALE GENOMIC DNA]</scope>
    <source>
        <strain>CJ2</strain>
    </source>
</reference>
<organism>
    <name type="scientific">Polaromonas naphthalenivorans (strain CJ2)</name>
    <dbReference type="NCBI Taxonomy" id="365044"/>
    <lineage>
        <taxon>Bacteria</taxon>
        <taxon>Pseudomonadati</taxon>
        <taxon>Pseudomonadota</taxon>
        <taxon>Betaproteobacteria</taxon>
        <taxon>Burkholderiales</taxon>
        <taxon>Comamonadaceae</taxon>
        <taxon>Polaromonas</taxon>
    </lineage>
</organism>
<name>BPHD_POLNA</name>
<sequence length="286" mass="31932">MTALTESSTSKFVKINEKGFSDFQIHYNEAGNGETVIMLHGGGPGAGGWSNYYRNIGAFVEAGYRVILKDSPGFNKSDAVVMDEQRGLVNARAVKGLMDALDIDRAHLVGNSMGGATALNFALEYPDRIGKLILMGPGGLGPSMFAPMPMEGIKLLFKLYAEPSYETLKQMLQVFLYDQSLITEELLQGRWEAIQRNPEHLKNFLVSAQKAPLSTWDVSARLGEIKAKTFITWGRDDRFVPLDHGLKLVWGINDARLHVFSKCGHWAQWEHADEFNRLVIDFLRHA</sequence>
<gene>
    <name evidence="1" type="primary">bphD</name>
    <name type="ordered locus">Pnap_4141</name>
</gene>
<evidence type="ECO:0000255" key="1">
    <source>
        <dbReference type="HAMAP-Rule" id="MF_01688"/>
    </source>
</evidence>
<dbReference type="EC" id="3.7.1.8" evidence="1"/>
<dbReference type="EMBL" id="CP000530">
    <property type="protein sequence ID" value="ABM39428.1"/>
    <property type="molecule type" value="Genomic_DNA"/>
</dbReference>
<dbReference type="RefSeq" id="WP_011797807.1">
    <property type="nucleotide sequence ID" value="NC_008757.1"/>
</dbReference>
<dbReference type="SMR" id="A1VUV0"/>
<dbReference type="ESTHER" id="polna-bphd">
    <property type="family name" value="Carbon-carbon_bond_hydrolase"/>
</dbReference>
<dbReference type="MEROPS" id="S33.016"/>
<dbReference type="KEGG" id="pna:Pnap_4141"/>
<dbReference type="HOGENOM" id="CLU_020336_13_2_4"/>
<dbReference type="OrthoDB" id="9799989at2"/>
<dbReference type="UniPathway" id="UPA00155">
    <property type="reaction ID" value="UER00253"/>
</dbReference>
<dbReference type="Proteomes" id="UP000000644">
    <property type="component" value="Plasmid pPNAP01"/>
</dbReference>
<dbReference type="GO" id="GO:0016020">
    <property type="term" value="C:membrane"/>
    <property type="evidence" value="ECO:0007669"/>
    <property type="project" value="TreeGrafter"/>
</dbReference>
<dbReference type="GO" id="GO:0018774">
    <property type="term" value="F:2,6-dioxo-6-phenylhexa-3-enoate hydrolase activity"/>
    <property type="evidence" value="ECO:0007669"/>
    <property type="project" value="RHEA"/>
</dbReference>
<dbReference type="GO" id="GO:0018771">
    <property type="term" value="F:2-hydroxy-6-oxonona-2,4-dienedioate hydrolase activity"/>
    <property type="evidence" value="ECO:0007669"/>
    <property type="project" value="UniProtKB-UniRule"/>
</dbReference>
<dbReference type="GO" id="GO:0047372">
    <property type="term" value="F:monoacylglycerol lipase activity"/>
    <property type="evidence" value="ECO:0007669"/>
    <property type="project" value="TreeGrafter"/>
</dbReference>
<dbReference type="GO" id="GO:0046464">
    <property type="term" value="P:acylglycerol catabolic process"/>
    <property type="evidence" value="ECO:0007669"/>
    <property type="project" value="TreeGrafter"/>
</dbReference>
<dbReference type="GO" id="GO:0070980">
    <property type="term" value="P:biphenyl catabolic process"/>
    <property type="evidence" value="ECO:0007669"/>
    <property type="project" value="UniProtKB-UniRule"/>
</dbReference>
<dbReference type="Gene3D" id="3.40.50.1820">
    <property type="entry name" value="alpha/beta hydrolase"/>
    <property type="match status" value="1"/>
</dbReference>
<dbReference type="HAMAP" id="MF_01688">
    <property type="entry name" value="Biphenyl_BphD"/>
    <property type="match status" value="1"/>
</dbReference>
<dbReference type="InterPro" id="IPR000073">
    <property type="entry name" value="AB_hydrolase_1"/>
</dbReference>
<dbReference type="InterPro" id="IPR029058">
    <property type="entry name" value="AB_hydrolase_fold"/>
</dbReference>
<dbReference type="InterPro" id="IPR050266">
    <property type="entry name" value="AB_hydrolase_sf"/>
</dbReference>
<dbReference type="InterPro" id="IPR000639">
    <property type="entry name" value="Epox_hydrolase-like"/>
</dbReference>
<dbReference type="InterPro" id="IPR017727">
    <property type="entry name" value="HOPD_hydrolase_BphD"/>
</dbReference>
<dbReference type="NCBIfam" id="TIGR03343">
    <property type="entry name" value="biphenyl_bphD"/>
    <property type="match status" value="1"/>
</dbReference>
<dbReference type="PANTHER" id="PTHR43798">
    <property type="entry name" value="MONOACYLGLYCEROL LIPASE"/>
    <property type="match status" value="1"/>
</dbReference>
<dbReference type="PANTHER" id="PTHR43798:SF5">
    <property type="entry name" value="MONOACYLGLYCEROL LIPASE ABHD6"/>
    <property type="match status" value="1"/>
</dbReference>
<dbReference type="Pfam" id="PF00561">
    <property type="entry name" value="Abhydrolase_1"/>
    <property type="match status" value="1"/>
</dbReference>
<dbReference type="PRINTS" id="PR00111">
    <property type="entry name" value="ABHYDROLASE"/>
</dbReference>
<dbReference type="PRINTS" id="PR00412">
    <property type="entry name" value="EPOXHYDRLASE"/>
</dbReference>
<dbReference type="SUPFAM" id="SSF53474">
    <property type="entry name" value="alpha/beta-Hydrolases"/>
    <property type="match status" value="1"/>
</dbReference>
<geneLocation type="plasmid">
    <name>pPNAP01</name>
</geneLocation>
<feature type="chain" id="PRO_0000373813" description="2-hydroxy-6-oxo-6-phenylhexa-2,4-dienoate hydrolase">
    <location>
        <begin position="1"/>
        <end position="286"/>
    </location>
</feature>
<feature type="active site" description="Proton acceptor" evidence="1">
    <location>
        <position position="265"/>
    </location>
</feature>
<feature type="binding site" evidence="1">
    <location>
        <begin position="42"/>
        <end position="43"/>
    </location>
    <ligand>
        <name>substrate</name>
    </ligand>
</feature>
<feature type="binding site" evidence="1">
    <location>
        <position position="51"/>
    </location>
    <ligand>
        <name>substrate</name>
    </ligand>
</feature>
<feature type="binding site" evidence="1">
    <location>
        <position position="111"/>
    </location>
    <ligand>
        <name>substrate</name>
    </ligand>
</feature>
<feature type="binding site" evidence="1">
    <location>
        <position position="180"/>
    </location>
    <ligand>
        <name>substrate</name>
    </ligand>
</feature>
<feature type="binding site" evidence="1">
    <location>
        <position position="190"/>
    </location>
    <ligand>
        <name>substrate</name>
    </ligand>
</feature>
<feature type="binding site" evidence="1">
    <location>
        <position position="266"/>
    </location>
    <ligand>
        <name>substrate</name>
    </ligand>
</feature>
<feature type="site" description="Transition state stabilizer" evidence="1">
    <location>
        <position position="112"/>
    </location>
</feature>